<comment type="function">
    <text evidence="1">Involved in control of chromosome replication initiation. Inhibits the cooperative binding of DnaA to the oriC region, thus negatively regulating initiation of chromosome replication. Inhibits the ability of DnaA-ATP to form a helix on DNA; does not disassemble preformed DnaA-DNA helices. Decreases the residence time of DnaA on the chromosome at its binding sites (oriC, replication forks and promoter-binding sites). Tethers DnaA to the replication machinery via the DNA polymerase beta sliding clamp subunit (dnaN). Associates with oriC and other DnaA targets on the chromosome in a DnaA-dependent manner.</text>
</comment>
<comment type="cofactor">
    <cofactor evidence="1">
        <name>Zn(2+)</name>
        <dbReference type="ChEBI" id="CHEBI:29105"/>
    </cofactor>
    <text evidence="1">Binds 1 zinc ion per subunit.</text>
</comment>
<comment type="subunit">
    <text evidence="1">Homotetramer. Interacts with both DnaA and DnaN, acting as a bridge between these two proteins.</text>
</comment>
<comment type="subcellular location">
    <subcellularLocation>
        <location evidence="1">Cytoplasm</location>
        <location evidence="1">Nucleoid</location>
    </subcellularLocation>
    <text evidence="1">Localizes in tight foci, which correspond to the replisome at mid-cell throughout the cell cycle.</text>
</comment>
<comment type="similarity">
    <text evidence="1">Belongs to the YabA family.</text>
</comment>
<gene>
    <name evidence="1" type="primary">yabA</name>
    <name type="ordered locus">M6_Spy0360</name>
</gene>
<protein>
    <recommendedName>
        <fullName evidence="1">Replication initiation control protein YabA</fullName>
    </recommendedName>
</protein>
<proteinExistence type="inferred from homology"/>
<keyword id="KW-0963">Cytoplasm</keyword>
<keyword id="KW-0235">DNA replication</keyword>
<keyword id="KW-0236">DNA replication inhibitor</keyword>
<keyword id="KW-0479">Metal-binding</keyword>
<keyword id="KW-0862">Zinc</keyword>
<reference key="1">
    <citation type="journal article" date="2004" name="J. Infect. Dis.">
        <title>Progress toward characterization of the group A Streptococcus metagenome: complete genome sequence of a macrolide-resistant serotype M6 strain.</title>
        <authorList>
            <person name="Banks D.J."/>
            <person name="Porcella S.F."/>
            <person name="Barbian K.D."/>
            <person name="Beres S.B."/>
            <person name="Philips L.E."/>
            <person name="Voyich J.M."/>
            <person name="DeLeo F.R."/>
            <person name="Martin J.M."/>
            <person name="Somerville G.A."/>
            <person name="Musser J.M."/>
        </authorList>
    </citation>
    <scope>NUCLEOTIDE SEQUENCE [LARGE SCALE GENOMIC DNA]</scope>
    <source>
        <strain>ATCC BAA-946 / MGAS10394</strain>
    </source>
</reference>
<name>YABA_STRP6</name>
<dbReference type="EMBL" id="CP000003">
    <property type="protein sequence ID" value="AAT86495.1"/>
    <property type="molecule type" value="Genomic_DNA"/>
</dbReference>
<dbReference type="RefSeq" id="WP_002985838.1">
    <property type="nucleotide sequence ID" value="NC_006086.1"/>
</dbReference>
<dbReference type="SMR" id="Q5XDL8"/>
<dbReference type="GeneID" id="69901336"/>
<dbReference type="KEGG" id="spa:M6_Spy0360"/>
<dbReference type="HOGENOM" id="CLU_157169_0_0_9"/>
<dbReference type="Proteomes" id="UP000001167">
    <property type="component" value="Chromosome"/>
</dbReference>
<dbReference type="GO" id="GO:0009295">
    <property type="term" value="C:nucleoid"/>
    <property type="evidence" value="ECO:0007669"/>
    <property type="project" value="UniProtKB-SubCell"/>
</dbReference>
<dbReference type="GO" id="GO:0006260">
    <property type="term" value="P:DNA replication"/>
    <property type="evidence" value="ECO:0007669"/>
    <property type="project" value="UniProtKB-UniRule"/>
</dbReference>
<dbReference type="HAMAP" id="MF_01159">
    <property type="entry name" value="YabA"/>
    <property type="match status" value="1"/>
</dbReference>
<dbReference type="InterPro" id="IPR010377">
    <property type="entry name" value="YabA"/>
</dbReference>
<dbReference type="NCBIfam" id="NF009640">
    <property type="entry name" value="PRK13169.1-1"/>
    <property type="match status" value="1"/>
</dbReference>
<dbReference type="Pfam" id="PF06156">
    <property type="entry name" value="YabA"/>
    <property type="match status" value="1"/>
</dbReference>
<dbReference type="PIRSF" id="PIRSF021439">
    <property type="entry name" value="DUF972"/>
    <property type="match status" value="1"/>
</dbReference>
<sequence length="107" mass="12797">MNKKELFDAFDGFSQNLMVTLAEIEAMKKQVQSLVEENTILRLENTKLRERLSHLEHETVAKNPSKQRKDHLEGIYDEGFHICNFFYGQRRENDEECMFCRELLDRK</sequence>
<accession>Q5XDL8</accession>
<organism>
    <name type="scientific">Streptococcus pyogenes serotype M6 (strain ATCC BAA-946 / MGAS10394)</name>
    <dbReference type="NCBI Taxonomy" id="286636"/>
    <lineage>
        <taxon>Bacteria</taxon>
        <taxon>Bacillati</taxon>
        <taxon>Bacillota</taxon>
        <taxon>Bacilli</taxon>
        <taxon>Lactobacillales</taxon>
        <taxon>Streptococcaceae</taxon>
        <taxon>Streptococcus</taxon>
    </lineage>
</organism>
<evidence type="ECO:0000255" key="1">
    <source>
        <dbReference type="HAMAP-Rule" id="MF_01159"/>
    </source>
</evidence>
<feature type="chain" id="PRO_0000211931" description="Replication initiation control protein YabA">
    <location>
        <begin position="1"/>
        <end position="107"/>
    </location>
</feature>
<feature type="binding site" evidence="1">
    <location>
        <position position="81"/>
    </location>
    <ligand>
        <name>Zn(2+)</name>
        <dbReference type="ChEBI" id="CHEBI:29105"/>
    </ligand>
</feature>
<feature type="binding site" evidence="1">
    <location>
        <position position="83"/>
    </location>
    <ligand>
        <name>Zn(2+)</name>
        <dbReference type="ChEBI" id="CHEBI:29105"/>
    </ligand>
</feature>
<feature type="binding site" evidence="1">
    <location>
        <position position="97"/>
    </location>
    <ligand>
        <name>Zn(2+)</name>
        <dbReference type="ChEBI" id="CHEBI:29105"/>
    </ligand>
</feature>
<feature type="binding site" evidence="1">
    <location>
        <position position="100"/>
    </location>
    <ligand>
        <name>Zn(2+)</name>
        <dbReference type="ChEBI" id="CHEBI:29105"/>
    </ligand>
</feature>